<comment type="function">
    <text evidence="1">Redox regulated molecular chaperone. Protects both thermally unfolding and oxidatively damaged proteins from irreversible aggregation. Plays an important role in the bacterial defense system toward oxidative stress.</text>
</comment>
<comment type="subcellular location">
    <subcellularLocation>
        <location evidence="1">Cytoplasm</location>
    </subcellularLocation>
</comment>
<comment type="PTM">
    <text evidence="1">Under oxidizing conditions two disulfide bonds are formed involving the reactive cysteines. Under reducing conditions zinc is bound to the reactive cysteines and the protein is inactive.</text>
</comment>
<comment type="similarity">
    <text evidence="1">Belongs to the HSP33 family.</text>
</comment>
<evidence type="ECO:0000255" key="1">
    <source>
        <dbReference type="HAMAP-Rule" id="MF_00117"/>
    </source>
</evidence>
<sequence>MDKLIKTISASGAFRAYVLDCTETVRYAQERHHTLSSSTVALGRTLIANQILAANQKGDSKVTVKVIGDSSFGHIISVADTKGHVKGYIQNPGVDIKKTATGEVLVGPFMGQGHFVTITDYGTGNPYTSTTPLITGEIGEDLAYYLTESEQTPSAVGLNVLLDQEDKVKVAGGFMLQVLPGASVEEISHYEKRIQEMPAISTLLASENHIDALLAAIYGEEPYKRLAEEQLSFQCDCSRERFASALMSLPKADLLTMLNEDKGAEIVCQFCGTKYQFDQTDLEVLINDKA</sequence>
<dbReference type="EMBL" id="FM204883">
    <property type="protein sequence ID" value="CAW95464.1"/>
    <property type="molecule type" value="Genomic_DNA"/>
</dbReference>
<dbReference type="RefSeq" id="WP_015898642.1">
    <property type="nucleotide sequence ID" value="NC_012471.1"/>
</dbReference>
<dbReference type="SMR" id="C0MAF0"/>
<dbReference type="KEGG" id="seu:SEQ_2120"/>
<dbReference type="HOGENOM" id="CLU_054493_1_0_9"/>
<dbReference type="OrthoDB" id="9776534at2"/>
<dbReference type="Proteomes" id="UP000001365">
    <property type="component" value="Chromosome"/>
</dbReference>
<dbReference type="GO" id="GO:0005737">
    <property type="term" value="C:cytoplasm"/>
    <property type="evidence" value="ECO:0007669"/>
    <property type="project" value="UniProtKB-SubCell"/>
</dbReference>
<dbReference type="GO" id="GO:0044183">
    <property type="term" value="F:protein folding chaperone"/>
    <property type="evidence" value="ECO:0007669"/>
    <property type="project" value="TreeGrafter"/>
</dbReference>
<dbReference type="GO" id="GO:0051082">
    <property type="term" value="F:unfolded protein binding"/>
    <property type="evidence" value="ECO:0007669"/>
    <property type="project" value="UniProtKB-UniRule"/>
</dbReference>
<dbReference type="GO" id="GO:0042026">
    <property type="term" value="P:protein refolding"/>
    <property type="evidence" value="ECO:0007669"/>
    <property type="project" value="TreeGrafter"/>
</dbReference>
<dbReference type="CDD" id="cd00498">
    <property type="entry name" value="Hsp33"/>
    <property type="match status" value="1"/>
</dbReference>
<dbReference type="Gene3D" id="3.55.30.10">
    <property type="entry name" value="Hsp33 domain"/>
    <property type="match status" value="1"/>
</dbReference>
<dbReference type="Gene3D" id="3.90.1280.10">
    <property type="entry name" value="HSP33 redox switch-like"/>
    <property type="match status" value="1"/>
</dbReference>
<dbReference type="HAMAP" id="MF_00117">
    <property type="entry name" value="HslO"/>
    <property type="match status" value="1"/>
</dbReference>
<dbReference type="InterPro" id="IPR000397">
    <property type="entry name" value="Heat_shock_Hsp33"/>
</dbReference>
<dbReference type="InterPro" id="IPR016154">
    <property type="entry name" value="Heat_shock_Hsp33_C"/>
</dbReference>
<dbReference type="InterPro" id="IPR016153">
    <property type="entry name" value="Heat_shock_Hsp33_N"/>
</dbReference>
<dbReference type="NCBIfam" id="NF001033">
    <property type="entry name" value="PRK00114.1"/>
    <property type="match status" value="1"/>
</dbReference>
<dbReference type="PANTHER" id="PTHR30111">
    <property type="entry name" value="33 KDA CHAPERONIN"/>
    <property type="match status" value="1"/>
</dbReference>
<dbReference type="PANTHER" id="PTHR30111:SF1">
    <property type="entry name" value="33 KDA CHAPERONIN"/>
    <property type="match status" value="1"/>
</dbReference>
<dbReference type="Pfam" id="PF01430">
    <property type="entry name" value="HSP33"/>
    <property type="match status" value="1"/>
</dbReference>
<dbReference type="PIRSF" id="PIRSF005261">
    <property type="entry name" value="Heat_shock_Hsp33"/>
    <property type="match status" value="1"/>
</dbReference>
<dbReference type="SUPFAM" id="SSF64397">
    <property type="entry name" value="Hsp33 domain"/>
    <property type="match status" value="1"/>
</dbReference>
<dbReference type="SUPFAM" id="SSF118352">
    <property type="entry name" value="HSP33 redox switch-like"/>
    <property type="match status" value="1"/>
</dbReference>
<organism>
    <name type="scientific">Streptococcus equi subsp. equi (strain 4047)</name>
    <dbReference type="NCBI Taxonomy" id="553482"/>
    <lineage>
        <taxon>Bacteria</taxon>
        <taxon>Bacillati</taxon>
        <taxon>Bacillota</taxon>
        <taxon>Bacilli</taxon>
        <taxon>Lactobacillales</taxon>
        <taxon>Streptococcaceae</taxon>
        <taxon>Streptococcus</taxon>
    </lineage>
</organism>
<reference key="1">
    <citation type="journal article" date="2009" name="PLoS Pathog.">
        <title>Genomic evidence for the evolution of Streptococcus equi: host restriction, increased virulence, and genetic exchange with human pathogens.</title>
        <authorList>
            <person name="Holden M.T.G."/>
            <person name="Heather Z."/>
            <person name="Paillot R."/>
            <person name="Steward K.F."/>
            <person name="Webb K."/>
            <person name="Ainslie F."/>
            <person name="Jourdan T."/>
            <person name="Bason N.C."/>
            <person name="Holroyd N.E."/>
            <person name="Mungall K."/>
            <person name="Quail M.A."/>
            <person name="Sanders M."/>
            <person name="Simmonds M."/>
            <person name="Willey D."/>
            <person name="Brooks K."/>
            <person name="Aanensen D.M."/>
            <person name="Spratt B.G."/>
            <person name="Jolley K.A."/>
            <person name="Maiden M.C.J."/>
            <person name="Kehoe M."/>
            <person name="Chanter N."/>
            <person name="Bentley S.D."/>
            <person name="Robinson C."/>
            <person name="Maskell D.J."/>
            <person name="Parkhill J."/>
            <person name="Waller A.S."/>
        </authorList>
    </citation>
    <scope>NUCLEOTIDE SEQUENCE [LARGE SCALE GENOMIC DNA]</scope>
    <source>
        <strain>4047</strain>
    </source>
</reference>
<keyword id="KW-0143">Chaperone</keyword>
<keyword id="KW-0963">Cytoplasm</keyword>
<keyword id="KW-1015">Disulfide bond</keyword>
<keyword id="KW-0676">Redox-active center</keyword>
<keyword id="KW-0346">Stress response</keyword>
<keyword id="KW-0862">Zinc</keyword>
<gene>
    <name evidence="1" type="primary">hslO</name>
    <name type="ordered locus">SEQ_2120</name>
</gene>
<name>HSLO_STRE4</name>
<feature type="chain" id="PRO_1000119264" description="33 kDa chaperonin">
    <location>
        <begin position="1"/>
        <end position="290"/>
    </location>
</feature>
<feature type="disulfide bond" description="Redox-active" evidence="1">
    <location>
        <begin position="235"/>
        <end position="237"/>
    </location>
</feature>
<feature type="disulfide bond" description="Redox-active" evidence="1">
    <location>
        <begin position="268"/>
        <end position="271"/>
    </location>
</feature>
<protein>
    <recommendedName>
        <fullName evidence="1">33 kDa chaperonin</fullName>
    </recommendedName>
    <alternativeName>
        <fullName evidence="1">Heat shock protein 33 homolog</fullName>
        <shortName evidence="1">HSP33</shortName>
    </alternativeName>
</protein>
<accession>C0MAF0</accession>
<proteinExistence type="inferred from homology"/>